<dbReference type="EMBL" id="BA000033">
    <property type="protein sequence ID" value="BAB95368.1"/>
    <property type="molecule type" value="Genomic_DNA"/>
</dbReference>
<dbReference type="SMR" id="P66229"/>
<dbReference type="KEGG" id="sam:MW1503"/>
<dbReference type="HOGENOM" id="CLU_190949_0_2_9"/>
<dbReference type="GO" id="GO:0005737">
    <property type="term" value="C:cytoplasm"/>
    <property type="evidence" value="ECO:0007669"/>
    <property type="project" value="UniProtKB-ARBA"/>
</dbReference>
<dbReference type="GO" id="GO:1990904">
    <property type="term" value="C:ribonucleoprotein complex"/>
    <property type="evidence" value="ECO:0007669"/>
    <property type="project" value="UniProtKB-KW"/>
</dbReference>
<dbReference type="GO" id="GO:0005840">
    <property type="term" value="C:ribosome"/>
    <property type="evidence" value="ECO:0007669"/>
    <property type="project" value="UniProtKB-KW"/>
</dbReference>
<dbReference type="GO" id="GO:0003735">
    <property type="term" value="F:structural constituent of ribosome"/>
    <property type="evidence" value="ECO:0007669"/>
    <property type="project" value="InterPro"/>
</dbReference>
<dbReference type="GO" id="GO:0006412">
    <property type="term" value="P:translation"/>
    <property type="evidence" value="ECO:0007669"/>
    <property type="project" value="UniProtKB-UniRule"/>
</dbReference>
<dbReference type="Gene3D" id="2.20.28.120">
    <property type="entry name" value="Ribosomal protein L33"/>
    <property type="match status" value="1"/>
</dbReference>
<dbReference type="HAMAP" id="MF_00294">
    <property type="entry name" value="Ribosomal_bL33"/>
    <property type="match status" value="1"/>
</dbReference>
<dbReference type="InterPro" id="IPR001705">
    <property type="entry name" value="Ribosomal_bL33"/>
</dbReference>
<dbReference type="InterPro" id="IPR018264">
    <property type="entry name" value="Ribosomal_bL33_CS"/>
</dbReference>
<dbReference type="InterPro" id="IPR038584">
    <property type="entry name" value="Ribosomal_bL33_sf"/>
</dbReference>
<dbReference type="InterPro" id="IPR011332">
    <property type="entry name" value="Ribosomal_zn-bd"/>
</dbReference>
<dbReference type="NCBIfam" id="NF001764">
    <property type="entry name" value="PRK00504.1"/>
    <property type="match status" value="1"/>
</dbReference>
<dbReference type="NCBIfam" id="NF001860">
    <property type="entry name" value="PRK00595.1"/>
    <property type="match status" value="1"/>
</dbReference>
<dbReference type="NCBIfam" id="TIGR01023">
    <property type="entry name" value="rpmG_bact"/>
    <property type="match status" value="1"/>
</dbReference>
<dbReference type="PANTHER" id="PTHR43168">
    <property type="entry name" value="50S RIBOSOMAL PROTEIN L33, CHLOROPLASTIC"/>
    <property type="match status" value="1"/>
</dbReference>
<dbReference type="PANTHER" id="PTHR43168:SF2">
    <property type="entry name" value="LARGE RIBOSOMAL SUBUNIT PROTEIN BL33C"/>
    <property type="match status" value="1"/>
</dbReference>
<dbReference type="Pfam" id="PF00471">
    <property type="entry name" value="Ribosomal_L33"/>
    <property type="match status" value="1"/>
</dbReference>
<dbReference type="SUPFAM" id="SSF57829">
    <property type="entry name" value="Zn-binding ribosomal proteins"/>
    <property type="match status" value="1"/>
</dbReference>
<dbReference type="PROSITE" id="PS00582">
    <property type="entry name" value="RIBOSOMAL_L33"/>
    <property type="match status" value="1"/>
</dbReference>
<evidence type="ECO:0000255" key="1">
    <source>
        <dbReference type="HAMAP-Rule" id="MF_00294"/>
    </source>
</evidence>
<evidence type="ECO:0000305" key="2"/>
<accession>P66229</accession>
<accession>Q99TU3</accession>
<name>RL331_STAAW</name>
<organism>
    <name type="scientific">Staphylococcus aureus (strain MW2)</name>
    <dbReference type="NCBI Taxonomy" id="196620"/>
    <lineage>
        <taxon>Bacteria</taxon>
        <taxon>Bacillati</taxon>
        <taxon>Bacillota</taxon>
        <taxon>Bacilli</taxon>
        <taxon>Bacillales</taxon>
        <taxon>Staphylococcaceae</taxon>
        <taxon>Staphylococcus</taxon>
    </lineage>
</organism>
<proteinExistence type="inferred from homology"/>
<gene>
    <name type="primary">rpmG1</name>
    <name type="ordered locus">MW1503</name>
</gene>
<protein>
    <recommendedName>
        <fullName evidence="1">Large ribosomal subunit protein bL33A</fullName>
    </recommendedName>
    <alternativeName>
        <fullName>50S ribosomal protein L33 1</fullName>
    </alternativeName>
</protein>
<comment type="similarity">
    <text evidence="2">Belongs to the bacterial ribosomal protein bL33 family.</text>
</comment>
<reference key="1">
    <citation type="journal article" date="2002" name="Lancet">
        <title>Genome and virulence determinants of high virulence community-acquired MRSA.</title>
        <authorList>
            <person name="Baba T."/>
            <person name="Takeuchi F."/>
            <person name="Kuroda M."/>
            <person name="Yuzawa H."/>
            <person name="Aoki K."/>
            <person name="Oguchi A."/>
            <person name="Nagai Y."/>
            <person name="Iwama N."/>
            <person name="Asano K."/>
            <person name="Naimi T."/>
            <person name="Kuroda H."/>
            <person name="Cui L."/>
            <person name="Yamamoto K."/>
            <person name="Hiramatsu K."/>
        </authorList>
    </citation>
    <scope>NUCLEOTIDE SEQUENCE [LARGE SCALE GENOMIC DNA]</scope>
    <source>
        <strain>MW2</strain>
    </source>
</reference>
<keyword id="KW-0687">Ribonucleoprotein</keyword>
<keyword id="KW-0689">Ribosomal protein</keyword>
<sequence length="49" mass="5873">MRVNVTLACTECGDRNYITTKNKRNNPERVEMKKFCSRENKQTLHRETK</sequence>
<feature type="chain" id="PRO_0000170226" description="Large ribosomal subunit protein bL33A">
    <location>
        <begin position="1"/>
        <end position="49"/>
    </location>
</feature>